<sequence length="119" mass="12944">TSIYTCYEGVGLPVDPLQGCHYYVTSQTCGFVPLLPIEVMKDRCCRELAAISSNCRCEGLRVFIDRAFPPSQSQGGGPPQPPLAPRCPTEVKRDFARTLALPGQCNLPTIHGGPYCVFP</sequence>
<reference evidence="4" key="1">
    <citation type="journal article" date="2011" name="Planta">
        <title>WCI, a novel wheat chymotrypsin inhibitor: purification, primary structure, inhibitory properties and heterologous expression.</title>
        <authorList>
            <person name="Di Maro A."/>
            <person name="Farisei F."/>
            <person name="Panichi D."/>
            <person name="Severino V."/>
            <person name="Bruni N."/>
            <person name="Ficca A.G."/>
            <person name="Ferranti P."/>
            <person name="Capuzzi V."/>
            <person name="Tedeschi F."/>
            <person name="Poerio E."/>
        </authorList>
    </citation>
    <scope>PROTEIN SEQUENCE</scope>
    <scope>FUNCTION</scope>
    <scope>MASS SPECTROMETRY</scope>
    <scope>VARIANT DES-(THR1)-WCI THR-1 DEL</scope>
    <source>
        <strain evidence="3">cv. San Pastore</strain>
        <tissue evidence="3">Endosperm</tissue>
    </source>
</reference>
<reference evidence="4" key="2">
    <citation type="submission" date="2001-12" db="EMBL/GenBank/DDBJ databases">
        <title>RT-PCR cloning of the wheat gene wci coding for a chymotrypsin inhibitor belonging to the cereal chloroform/methanol soluble proteins.</title>
        <authorList>
            <person name="Verghini R."/>
            <person name="Di Gennaro S."/>
            <person name="Poerio E."/>
        </authorList>
    </citation>
    <scope>NUCLEOTIDE SEQUENCE [MRNA]</scope>
    <source>
        <strain>cv. San Pastore</strain>
        <tissue>Immature kernel</tissue>
    </source>
</reference>
<evidence type="ECO:0000250" key="1">
    <source>
        <dbReference type="UniProtKB" id="P01087"/>
    </source>
</evidence>
<evidence type="ECO:0000269" key="2">
    <source>
    </source>
</evidence>
<evidence type="ECO:0000303" key="3">
    <source>
    </source>
</evidence>
<evidence type="ECO:0000305" key="4"/>
<accession>P83207</accession>
<accession>P83208</accession>
<protein>
    <recommendedName>
        <fullName>Chymotrypsin inhibitor WCI</fullName>
    </recommendedName>
    <alternativeName>
        <fullName>Chloroform/methanol-soluble protein WCI</fullName>
    </alternativeName>
</protein>
<feature type="chain" id="PRO_0000271234" description="Chymotrypsin inhibitor WCI">
    <location>
        <begin position="1"/>
        <end position="119"/>
    </location>
</feature>
<feature type="disulfide bond" evidence="1">
    <location>
        <begin position="6"/>
        <end position="55"/>
    </location>
</feature>
<feature type="disulfide bond" evidence="1">
    <location>
        <begin position="20"/>
        <end position="44"/>
    </location>
</feature>
<feature type="disulfide bond" evidence="1">
    <location>
        <begin position="29"/>
        <end position="87"/>
    </location>
</feature>
<feature type="disulfide bond" evidence="1">
    <location>
        <begin position="45"/>
        <end position="105"/>
    </location>
</feature>
<feature type="disulfide bond" evidence="1">
    <location>
        <begin position="57"/>
        <end position="116"/>
    </location>
</feature>
<feature type="sequence variant" description="In des-(Thr1)-WCI form." evidence="2">
    <location>
        <position position="1"/>
    </location>
</feature>
<comment type="function">
    <text evidence="2">Inhibits bovine, insect and wheat chymotrypsins. Inhibits bovine chymotrypsin with Ki of 0.6 nM. Does not inhibit human or wheat alpha-amylases, bovine pancreatic trypsin, or trypsin-like activity isolated from wheat.</text>
</comment>
<comment type="biophysicochemical properties">
    <phDependence>
        <text evidence="2">Optimum pH range is 7.0-9.0.</text>
    </phDependence>
    <temperatureDependence>
        <text evidence="2">Optimum temperature is 25 degrees Celsius.</text>
    </temperatureDependence>
</comment>
<comment type="subcellular location">
    <subcellularLocation>
        <location evidence="1">Secreted</location>
    </subcellularLocation>
</comment>
<comment type="mass spectrometry" mass="12933.4" method="Electrospray" evidence="2"/>
<comment type="similarity">
    <text evidence="4">Belongs to the protease inhibitor I6 (cereal trypsin/alpha-amylase inhibitor) family.</text>
</comment>
<keyword id="KW-0903">Direct protein sequencing</keyword>
<keyword id="KW-1015">Disulfide bond</keyword>
<keyword id="KW-0646">Protease inhibitor</keyword>
<keyword id="KW-1185">Reference proteome</keyword>
<keyword id="KW-0964">Secreted</keyword>
<keyword id="KW-0722">Serine protease inhibitor</keyword>
<organism>
    <name type="scientific">Triticum aestivum</name>
    <name type="common">Wheat</name>
    <dbReference type="NCBI Taxonomy" id="4565"/>
    <lineage>
        <taxon>Eukaryota</taxon>
        <taxon>Viridiplantae</taxon>
        <taxon>Streptophyta</taxon>
        <taxon>Embryophyta</taxon>
        <taxon>Tracheophyta</taxon>
        <taxon>Spermatophyta</taxon>
        <taxon>Magnoliopsida</taxon>
        <taxon>Liliopsida</taxon>
        <taxon>Poales</taxon>
        <taxon>Poaceae</taxon>
        <taxon>BOP clade</taxon>
        <taxon>Pooideae</taxon>
        <taxon>Triticodae</taxon>
        <taxon>Triticeae</taxon>
        <taxon>Triticinae</taxon>
        <taxon>Triticum</taxon>
    </lineage>
</organism>
<proteinExistence type="evidence at protein level"/>
<dbReference type="EMBL" id="AJ422078">
    <property type="protein sequence ID" value="CAD19440.1"/>
    <property type="molecule type" value="mRNA"/>
</dbReference>
<dbReference type="SMR" id="P83207"/>
<dbReference type="STRING" id="4565.P83207"/>
<dbReference type="MEROPS" id="I06.004"/>
<dbReference type="Proteomes" id="UP000019116">
    <property type="component" value="Unplaced"/>
</dbReference>
<dbReference type="ExpressionAtlas" id="P83207">
    <property type="expression patterns" value="baseline and differential"/>
</dbReference>
<dbReference type="GO" id="GO:0005576">
    <property type="term" value="C:extracellular region"/>
    <property type="evidence" value="ECO:0007669"/>
    <property type="project" value="UniProtKB-SubCell"/>
</dbReference>
<dbReference type="GO" id="GO:0004867">
    <property type="term" value="F:serine-type endopeptidase inhibitor activity"/>
    <property type="evidence" value="ECO:0000314"/>
    <property type="project" value="UniProtKB"/>
</dbReference>
<dbReference type="CDD" id="cd00261">
    <property type="entry name" value="AAI_SS"/>
    <property type="match status" value="1"/>
</dbReference>
<dbReference type="Gene3D" id="1.10.110.10">
    <property type="entry name" value="Plant lipid-transfer and hydrophobic proteins"/>
    <property type="match status" value="1"/>
</dbReference>
<dbReference type="InterPro" id="IPR006106">
    <property type="entry name" value="Allergen/soft/tryp_amyl_inhib"/>
</dbReference>
<dbReference type="InterPro" id="IPR006105">
    <property type="entry name" value="Allergen/tryp_amyl_inhib_CS"/>
</dbReference>
<dbReference type="InterPro" id="IPR036312">
    <property type="entry name" value="Bifun_inhib/LTP/seed_sf"/>
</dbReference>
<dbReference type="InterPro" id="IPR016140">
    <property type="entry name" value="Bifunc_inhib/LTP/seed_store"/>
</dbReference>
<dbReference type="PANTHER" id="PTHR34481:SF10">
    <property type="entry name" value="CHYMOTRYPSIN INHIBITOR WCI"/>
    <property type="match status" value="1"/>
</dbReference>
<dbReference type="PANTHER" id="PTHR34481">
    <property type="entry name" value="TRYPSIN/FACTOR XIIA INHIBITOR-RELATED"/>
    <property type="match status" value="1"/>
</dbReference>
<dbReference type="Pfam" id="PF00234">
    <property type="entry name" value="Tryp_alpha_amyl"/>
    <property type="match status" value="1"/>
</dbReference>
<dbReference type="PRINTS" id="PR00808">
    <property type="entry name" value="AMLASEINHBTR"/>
</dbReference>
<dbReference type="SMART" id="SM00499">
    <property type="entry name" value="AAI"/>
    <property type="match status" value="1"/>
</dbReference>
<dbReference type="SUPFAM" id="SSF47699">
    <property type="entry name" value="Bifunctional inhibitor/lipid-transfer protein/seed storage 2S albumin"/>
    <property type="match status" value="1"/>
</dbReference>
<dbReference type="PROSITE" id="PS00426">
    <property type="entry name" value="CEREAL_TRYP_AMYL_INH"/>
    <property type="match status" value="1"/>
</dbReference>
<name>ICIW2_WHEAT</name>